<keyword id="KW-0963">Cytoplasm</keyword>
<keyword id="KW-0369">Histidine metabolism</keyword>
<keyword id="KW-0378">Hydrolase</keyword>
<keyword id="KW-0408">Iron</keyword>
<keyword id="KW-0479">Metal-binding</keyword>
<keyword id="KW-0862">Zinc</keyword>
<name>HUTI_ECTM1</name>
<protein>
    <recommendedName>
        <fullName evidence="1">Imidazolonepropionase</fullName>
        <ecNumber evidence="1">3.5.2.7</ecNumber>
    </recommendedName>
    <alternativeName>
        <fullName evidence="1">Imidazolone-5-propionate hydrolase</fullName>
    </alternativeName>
</protein>
<sequence>MPTQSTSKRLWRDVQVFDGLVQLSEAMTVLVEDGRIAGLWPAREFNEAHAQGAACAGRGGVLTPGLVDCHTHLVYAGNRAGEFEQRLEGVSYEEIARAGGGILSSVRATRAASEDELIAASLPRLDALLADGVTTLEIKSGYGLTVADELKMLRVARRLGQLRPVRVITTLLGAHALPPEYAGRADDYVSLVCDEMIPAAAAEGLADAVDVFCEGIGFSPAQCERIYQAAQAHGLAIKAHAEQLSNLGGSALAARYGALSADHIEYLDEAGVRAMAEAGTVAVLLPGAFHVLRETQLPPIELLRQYGVPMAVASDANPGTSPICMPTLMANLACTLFRLTPREALSGMTAQAARALGRLDLGRIAVGAPADLCLWDIQQPAELAYAVQAGRLRQRVFKGEVVYAR</sequence>
<accession>A4XZQ4</accession>
<gene>
    <name evidence="1" type="primary">hutI</name>
    <name type="ordered locus">Pmen_4073</name>
</gene>
<feature type="chain" id="PRO_1000205586" description="Imidazolonepropionase">
    <location>
        <begin position="1"/>
        <end position="405"/>
    </location>
</feature>
<feature type="binding site" evidence="1">
    <location>
        <position position="70"/>
    </location>
    <ligand>
        <name>Fe(3+)</name>
        <dbReference type="ChEBI" id="CHEBI:29034"/>
    </ligand>
</feature>
<feature type="binding site" evidence="1">
    <location>
        <position position="70"/>
    </location>
    <ligand>
        <name>Zn(2+)</name>
        <dbReference type="ChEBI" id="CHEBI:29105"/>
    </ligand>
</feature>
<feature type="binding site" evidence="1">
    <location>
        <position position="72"/>
    </location>
    <ligand>
        <name>Fe(3+)</name>
        <dbReference type="ChEBI" id="CHEBI:29034"/>
    </ligand>
</feature>
<feature type="binding site" evidence="1">
    <location>
        <position position="72"/>
    </location>
    <ligand>
        <name>Zn(2+)</name>
        <dbReference type="ChEBI" id="CHEBI:29105"/>
    </ligand>
</feature>
<feature type="binding site" evidence="1">
    <location>
        <position position="79"/>
    </location>
    <ligand>
        <name>4-imidazolone-5-propanoate</name>
        <dbReference type="ChEBI" id="CHEBI:77893"/>
    </ligand>
</feature>
<feature type="binding site" evidence="1">
    <location>
        <position position="142"/>
    </location>
    <ligand>
        <name>4-imidazolone-5-propanoate</name>
        <dbReference type="ChEBI" id="CHEBI:77893"/>
    </ligand>
</feature>
<feature type="binding site" evidence="1">
    <location>
        <position position="142"/>
    </location>
    <ligand>
        <name>N-formimidoyl-L-glutamate</name>
        <dbReference type="ChEBI" id="CHEBI:58928"/>
    </ligand>
</feature>
<feature type="binding site" evidence="1">
    <location>
        <position position="175"/>
    </location>
    <ligand>
        <name>4-imidazolone-5-propanoate</name>
        <dbReference type="ChEBI" id="CHEBI:77893"/>
    </ligand>
</feature>
<feature type="binding site" evidence="1">
    <location>
        <position position="240"/>
    </location>
    <ligand>
        <name>Fe(3+)</name>
        <dbReference type="ChEBI" id="CHEBI:29034"/>
    </ligand>
</feature>
<feature type="binding site" evidence="1">
    <location>
        <position position="240"/>
    </location>
    <ligand>
        <name>Zn(2+)</name>
        <dbReference type="ChEBI" id="CHEBI:29105"/>
    </ligand>
</feature>
<feature type="binding site" evidence="1">
    <location>
        <position position="243"/>
    </location>
    <ligand>
        <name>4-imidazolone-5-propanoate</name>
        <dbReference type="ChEBI" id="CHEBI:77893"/>
    </ligand>
</feature>
<feature type="binding site" evidence="1">
    <location>
        <position position="315"/>
    </location>
    <ligand>
        <name>Fe(3+)</name>
        <dbReference type="ChEBI" id="CHEBI:29034"/>
    </ligand>
</feature>
<feature type="binding site" evidence="1">
    <location>
        <position position="315"/>
    </location>
    <ligand>
        <name>Zn(2+)</name>
        <dbReference type="ChEBI" id="CHEBI:29105"/>
    </ligand>
</feature>
<feature type="binding site" evidence="1">
    <location>
        <position position="317"/>
    </location>
    <ligand>
        <name>N-formimidoyl-L-glutamate</name>
        <dbReference type="ChEBI" id="CHEBI:58928"/>
    </ligand>
</feature>
<feature type="binding site" evidence="1">
    <location>
        <position position="319"/>
    </location>
    <ligand>
        <name>N-formimidoyl-L-glutamate</name>
        <dbReference type="ChEBI" id="CHEBI:58928"/>
    </ligand>
</feature>
<feature type="binding site" evidence="1">
    <location>
        <position position="320"/>
    </location>
    <ligand>
        <name>4-imidazolone-5-propanoate</name>
        <dbReference type="ChEBI" id="CHEBI:77893"/>
    </ligand>
</feature>
<organism>
    <name type="scientific">Ectopseudomonas mendocina (strain ymp)</name>
    <name type="common">Pseudomonas mendocina</name>
    <dbReference type="NCBI Taxonomy" id="399739"/>
    <lineage>
        <taxon>Bacteria</taxon>
        <taxon>Pseudomonadati</taxon>
        <taxon>Pseudomonadota</taxon>
        <taxon>Gammaproteobacteria</taxon>
        <taxon>Pseudomonadales</taxon>
        <taxon>Pseudomonadaceae</taxon>
        <taxon>Ectopseudomonas</taxon>
    </lineage>
</organism>
<proteinExistence type="inferred from homology"/>
<reference key="1">
    <citation type="submission" date="2007-04" db="EMBL/GenBank/DDBJ databases">
        <title>Complete sequence of Pseudomonas mendocina ymp.</title>
        <authorList>
            <consortium name="US DOE Joint Genome Institute"/>
            <person name="Copeland A."/>
            <person name="Lucas S."/>
            <person name="Lapidus A."/>
            <person name="Barry K."/>
            <person name="Glavina del Rio T."/>
            <person name="Dalin E."/>
            <person name="Tice H."/>
            <person name="Pitluck S."/>
            <person name="Kiss H."/>
            <person name="Brettin T."/>
            <person name="Detter J.C."/>
            <person name="Bruce D."/>
            <person name="Han C."/>
            <person name="Schmutz J."/>
            <person name="Larimer F."/>
            <person name="Land M."/>
            <person name="Hauser L."/>
            <person name="Kyrpides N."/>
            <person name="Mikhailova N."/>
            <person name="Hersman L."/>
            <person name="Dubois J."/>
            <person name="Maurice P."/>
            <person name="Richardson P."/>
        </authorList>
    </citation>
    <scope>NUCLEOTIDE SEQUENCE [LARGE SCALE GENOMIC DNA]</scope>
    <source>
        <strain>ymp</strain>
    </source>
</reference>
<evidence type="ECO:0000255" key="1">
    <source>
        <dbReference type="HAMAP-Rule" id="MF_00372"/>
    </source>
</evidence>
<dbReference type="EC" id="3.5.2.7" evidence="1"/>
<dbReference type="EMBL" id="CP000680">
    <property type="protein sequence ID" value="ABP86820.1"/>
    <property type="molecule type" value="Genomic_DNA"/>
</dbReference>
<dbReference type="SMR" id="A4XZQ4"/>
<dbReference type="STRING" id="399739.Pmen_4073"/>
<dbReference type="KEGG" id="pmy:Pmen_4073"/>
<dbReference type="PATRIC" id="fig|399739.8.peg.4125"/>
<dbReference type="eggNOG" id="COG1228">
    <property type="taxonomic scope" value="Bacteria"/>
</dbReference>
<dbReference type="HOGENOM" id="CLU_041647_0_0_6"/>
<dbReference type="OrthoDB" id="9776455at2"/>
<dbReference type="UniPathway" id="UPA00379">
    <property type="reaction ID" value="UER00551"/>
</dbReference>
<dbReference type="GO" id="GO:0005737">
    <property type="term" value="C:cytoplasm"/>
    <property type="evidence" value="ECO:0007669"/>
    <property type="project" value="UniProtKB-SubCell"/>
</dbReference>
<dbReference type="GO" id="GO:0050480">
    <property type="term" value="F:imidazolonepropionase activity"/>
    <property type="evidence" value="ECO:0007669"/>
    <property type="project" value="UniProtKB-UniRule"/>
</dbReference>
<dbReference type="GO" id="GO:0005506">
    <property type="term" value="F:iron ion binding"/>
    <property type="evidence" value="ECO:0007669"/>
    <property type="project" value="UniProtKB-UniRule"/>
</dbReference>
<dbReference type="GO" id="GO:0008270">
    <property type="term" value="F:zinc ion binding"/>
    <property type="evidence" value="ECO:0007669"/>
    <property type="project" value="UniProtKB-UniRule"/>
</dbReference>
<dbReference type="GO" id="GO:0019556">
    <property type="term" value="P:L-histidine catabolic process to glutamate and formamide"/>
    <property type="evidence" value="ECO:0007669"/>
    <property type="project" value="UniProtKB-UniPathway"/>
</dbReference>
<dbReference type="GO" id="GO:0019557">
    <property type="term" value="P:L-histidine catabolic process to glutamate and formate"/>
    <property type="evidence" value="ECO:0007669"/>
    <property type="project" value="UniProtKB-UniPathway"/>
</dbReference>
<dbReference type="CDD" id="cd01296">
    <property type="entry name" value="Imidazolone-5PH"/>
    <property type="match status" value="1"/>
</dbReference>
<dbReference type="FunFam" id="3.20.20.140:FF:000007">
    <property type="entry name" value="Imidazolonepropionase"/>
    <property type="match status" value="1"/>
</dbReference>
<dbReference type="Gene3D" id="3.20.20.140">
    <property type="entry name" value="Metal-dependent hydrolases"/>
    <property type="match status" value="1"/>
</dbReference>
<dbReference type="Gene3D" id="2.30.40.10">
    <property type="entry name" value="Urease, subunit C, domain 1"/>
    <property type="match status" value="1"/>
</dbReference>
<dbReference type="HAMAP" id="MF_00372">
    <property type="entry name" value="HutI"/>
    <property type="match status" value="1"/>
</dbReference>
<dbReference type="InterPro" id="IPR006680">
    <property type="entry name" value="Amidohydro-rel"/>
</dbReference>
<dbReference type="InterPro" id="IPR005920">
    <property type="entry name" value="HutI"/>
</dbReference>
<dbReference type="InterPro" id="IPR011059">
    <property type="entry name" value="Metal-dep_hydrolase_composite"/>
</dbReference>
<dbReference type="InterPro" id="IPR032466">
    <property type="entry name" value="Metal_Hydrolase"/>
</dbReference>
<dbReference type="NCBIfam" id="TIGR01224">
    <property type="entry name" value="hutI"/>
    <property type="match status" value="1"/>
</dbReference>
<dbReference type="PANTHER" id="PTHR42752">
    <property type="entry name" value="IMIDAZOLONEPROPIONASE"/>
    <property type="match status" value="1"/>
</dbReference>
<dbReference type="PANTHER" id="PTHR42752:SF1">
    <property type="entry name" value="IMIDAZOLONEPROPIONASE-RELATED"/>
    <property type="match status" value="1"/>
</dbReference>
<dbReference type="Pfam" id="PF01979">
    <property type="entry name" value="Amidohydro_1"/>
    <property type="match status" value="1"/>
</dbReference>
<dbReference type="SUPFAM" id="SSF51338">
    <property type="entry name" value="Composite domain of metallo-dependent hydrolases"/>
    <property type="match status" value="2"/>
</dbReference>
<dbReference type="SUPFAM" id="SSF51556">
    <property type="entry name" value="Metallo-dependent hydrolases"/>
    <property type="match status" value="1"/>
</dbReference>
<comment type="function">
    <text evidence="1">Catalyzes the hydrolytic cleavage of the carbon-nitrogen bond in imidazolone-5-propanoate to yield N-formimidoyl-L-glutamate. It is the third step in the universal histidine degradation pathway.</text>
</comment>
<comment type="catalytic activity">
    <reaction evidence="1">
        <text>4-imidazolone-5-propanoate + H2O = N-formimidoyl-L-glutamate</text>
        <dbReference type="Rhea" id="RHEA:23660"/>
        <dbReference type="ChEBI" id="CHEBI:15377"/>
        <dbReference type="ChEBI" id="CHEBI:58928"/>
        <dbReference type="ChEBI" id="CHEBI:77893"/>
        <dbReference type="EC" id="3.5.2.7"/>
    </reaction>
</comment>
<comment type="cofactor">
    <cofactor evidence="1">
        <name>Zn(2+)</name>
        <dbReference type="ChEBI" id="CHEBI:29105"/>
    </cofactor>
    <cofactor evidence="1">
        <name>Fe(3+)</name>
        <dbReference type="ChEBI" id="CHEBI:29034"/>
    </cofactor>
    <text evidence="1">Binds 1 zinc or iron ion per subunit.</text>
</comment>
<comment type="pathway">
    <text evidence="1">Amino-acid degradation; L-histidine degradation into L-glutamate; N-formimidoyl-L-glutamate from L-histidine: step 3/3.</text>
</comment>
<comment type="subcellular location">
    <subcellularLocation>
        <location evidence="1">Cytoplasm</location>
    </subcellularLocation>
</comment>
<comment type="similarity">
    <text evidence="1">Belongs to the metallo-dependent hydrolases superfamily. HutI family.</text>
</comment>